<proteinExistence type="inferred from homology"/>
<comment type="function">
    <text evidence="1">May play a role in DNA repair. It seems to be involved in an RecBC-independent recombinational process of DNA repair. It may act with RecF and RecO.</text>
</comment>
<comment type="similarity">
    <text evidence="1">Belongs to the RecR family.</text>
</comment>
<dbReference type="EMBL" id="CP001110">
    <property type="protein sequence ID" value="ACF43450.1"/>
    <property type="molecule type" value="Genomic_DNA"/>
</dbReference>
<dbReference type="RefSeq" id="WP_012507942.1">
    <property type="nucleotide sequence ID" value="NC_011060.1"/>
</dbReference>
<dbReference type="SMR" id="B4SGN7"/>
<dbReference type="STRING" id="324925.Ppha_1175"/>
<dbReference type="KEGG" id="pph:Ppha_1175"/>
<dbReference type="eggNOG" id="COG0353">
    <property type="taxonomic scope" value="Bacteria"/>
</dbReference>
<dbReference type="HOGENOM" id="CLU_060739_1_0_10"/>
<dbReference type="OrthoDB" id="9802672at2"/>
<dbReference type="Proteomes" id="UP000002724">
    <property type="component" value="Chromosome"/>
</dbReference>
<dbReference type="GO" id="GO:0003677">
    <property type="term" value="F:DNA binding"/>
    <property type="evidence" value="ECO:0007669"/>
    <property type="project" value="UniProtKB-UniRule"/>
</dbReference>
<dbReference type="GO" id="GO:0008270">
    <property type="term" value="F:zinc ion binding"/>
    <property type="evidence" value="ECO:0007669"/>
    <property type="project" value="UniProtKB-KW"/>
</dbReference>
<dbReference type="GO" id="GO:0006310">
    <property type="term" value="P:DNA recombination"/>
    <property type="evidence" value="ECO:0007669"/>
    <property type="project" value="UniProtKB-UniRule"/>
</dbReference>
<dbReference type="GO" id="GO:0006281">
    <property type="term" value="P:DNA repair"/>
    <property type="evidence" value="ECO:0007669"/>
    <property type="project" value="UniProtKB-UniRule"/>
</dbReference>
<dbReference type="CDD" id="cd01025">
    <property type="entry name" value="TOPRIM_recR"/>
    <property type="match status" value="1"/>
</dbReference>
<dbReference type="Gene3D" id="3.40.1360.10">
    <property type="match status" value="1"/>
</dbReference>
<dbReference type="Gene3D" id="6.10.250.240">
    <property type="match status" value="1"/>
</dbReference>
<dbReference type="Gene3D" id="1.10.8.420">
    <property type="entry name" value="RecR Domain 1"/>
    <property type="match status" value="1"/>
</dbReference>
<dbReference type="HAMAP" id="MF_00017">
    <property type="entry name" value="RecR"/>
    <property type="match status" value="1"/>
</dbReference>
<dbReference type="InterPro" id="IPR000093">
    <property type="entry name" value="DNA_Rcmb_RecR"/>
</dbReference>
<dbReference type="InterPro" id="IPR023627">
    <property type="entry name" value="Rcmb_RecR"/>
</dbReference>
<dbReference type="InterPro" id="IPR006171">
    <property type="entry name" value="TOPRIM_dom"/>
</dbReference>
<dbReference type="InterPro" id="IPR034137">
    <property type="entry name" value="TOPRIM_RecR"/>
</dbReference>
<dbReference type="NCBIfam" id="TIGR00615">
    <property type="entry name" value="recR"/>
    <property type="match status" value="1"/>
</dbReference>
<dbReference type="PANTHER" id="PTHR30446">
    <property type="entry name" value="RECOMBINATION PROTEIN RECR"/>
    <property type="match status" value="1"/>
</dbReference>
<dbReference type="PANTHER" id="PTHR30446:SF0">
    <property type="entry name" value="RECOMBINATION PROTEIN RECR"/>
    <property type="match status" value="1"/>
</dbReference>
<dbReference type="Pfam" id="PF21175">
    <property type="entry name" value="RecR_C"/>
    <property type="match status" value="1"/>
</dbReference>
<dbReference type="Pfam" id="PF21176">
    <property type="entry name" value="RecR_HhH"/>
    <property type="match status" value="1"/>
</dbReference>
<dbReference type="Pfam" id="PF13662">
    <property type="entry name" value="Toprim_4"/>
    <property type="match status" value="1"/>
</dbReference>
<dbReference type="SMART" id="SM00493">
    <property type="entry name" value="TOPRIM"/>
    <property type="match status" value="1"/>
</dbReference>
<dbReference type="SUPFAM" id="SSF111304">
    <property type="entry name" value="Recombination protein RecR"/>
    <property type="match status" value="1"/>
</dbReference>
<dbReference type="PROSITE" id="PS50880">
    <property type="entry name" value="TOPRIM"/>
    <property type="match status" value="1"/>
</dbReference>
<feature type="chain" id="PRO_1000089751" description="Recombination protein RecR">
    <location>
        <begin position="1"/>
        <end position="204"/>
    </location>
</feature>
<feature type="domain" description="Toprim" evidence="1">
    <location>
        <begin position="83"/>
        <end position="181"/>
    </location>
</feature>
<feature type="zinc finger region" description="C4-type" evidence="1">
    <location>
        <begin position="58"/>
        <end position="75"/>
    </location>
</feature>
<organism>
    <name type="scientific">Pelodictyon phaeoclathratiforme (strain DSM 5477 / BU-1)</name>
    <dbReference type="NCBI Taxonomy" id="324925"/>
    <lineage>
        <taxon>Bacteria</taxon>
        <taxon>Pseudomonadati</taxon>
        <taxon>Chlorobiota</taxon>
        <taxon>Chlorobiia</taxon>
        <taxon>Chlorobiales</taxon>
        <taxon>Chlorobiaceae</taxon>
        <taxon>Chlorobium/Pelodictyon group</taxon>
        <taxon>Pelodictyon</taxon>
    </lineage>
</organism>
<reference key="1">
    <citation type="submission" date="2008-06" db="EMBL/GenBank/DDBJ databases">
        <title>Complete sequence of Pelodictyon phaeoclathratiforme BU-1.</title>
        <authorList>
            <consortium name="US DOE Joint Genome Institute"/>
            <person name="Lucas S."/>
            <person name="Copeland A."/>
            <person name="Lapidus A."/>
            <person name="Glavina del Rio T."/>
            <person name="Dalin E."/>
            <person name="Tice H."/>
            <person name="Bruce D."/>
            <person name="Goodwin L."/>
            <person name="Pitluck S."/>
            <person name="Schmutz J."/>
            <person name="Larimer F."/>
            <person name="Land M."/>
            <person name="Hauser L."/>
            <person name="Kyrpides N."/>
            <person name="Mikhailova N."/>
            <person name="Liu Z."/>
            <person name="Li T."/>
            <person name="Zhao F."/>
            <person name="Overmann J."/>
            <person name="Bryant D.A."/>
            <person name="Richardson P."/>
        </authorList>
    </citation>
    <scope>NUCLEOTIDE SEQUENCE [LARGE SCALE GENOMIC DNA]</scope>
    <source>
        <strain>DSM 5477 / BU-1</strain>
    </source>
</reference>
<accession>B4SGN7</accession>
<gene>
    <name evidence="1" type="primary">recR</name>
    <name type="ordered locus">Ppha_1175</name>
</gene>
<evidence type="ECO:0000255" key="1">
    <source>
        <dbReference type="HAMAP-Rule" id="MF_00017"/>
    </source>
</evidence>
<protein>
    <recommendedName>
        <fullName evidence="1">Recombination protein RecR</fullName>
    </recommendedName>
</protein>
<name>RECR_PELPB</name>
<keyword id="KW-0227">DNA damage</keyword>
<keyword id="KW-0233">DNA recombination</keyword>
<keyword id="KW-0234">DNA repair</keyword>
<keyword id="KW-0479">Metal-binding</keyword>
<keyword id="KW-1185">Reference proteome</keyword>
<keyword id="KW-0862">Zinc</keyword>
<keyword id="KW-0863">Zinc-finger</keyword>
<sequence length="204" mass="22339">MRYTSAALESLIDEFAKLPGVGRKTAQRLAMYILREPRAEAERLAEALLEAKDNVIRCSVCQNITDVGVDPCALCTSKARDRSVICVVESPVDMLAFEKTGHYKGLYHVLHGVISPLDGIGPDDIKVRELLLRFTMPQSPAVREVVLALNPTIEGETTALYLSKLLKPLGIHVTKIARGIPVGAELEFIDEATLSRAMEGRTVV</sequence>